<accession>Q96NG3</accession>
<accession>Q6NX40</accession>
<accession>Q6PJ04</accession>
<accession>Q9H0K5</accession>
<keyword id="KW-0002">3D-structure</keyword>
<keyword id="KW-0025">Alternative splicing</keyword>
<keyword id="KW-0966">Cell projection</keyword>
<keyword id="KW-1186">Ciliopathy</keyword>
<keyword id="KW-0963">Cytoplasm</keyword>
<keyword id="KW-0206">Cytoskeleton</keyword>
<keyword id="KW-1012">Kartagener syndrome</keyword>
<keyword id="KW-0990">Primary ciliary dyskinesia</keyword>
<keyword id="KW-1267">Proteomics identification</keyword>
<keyword id="KW-1185">Reference proteome</keyword>
<keyword id="KW-0677">Repeat</keyword>
<keyword id="KW-0802">TPR repeat</keyword>
<reference key="1">
    <citation type="journal article" date="2001" name="Genome Res.">
        <title>Towards a catalog of human genes and proteins: sequencing and analysis of 500 novel complete protein coding human cDNAs.</title>
        <authorList>
            <person name="Wiemann S."/>
            <person name="Weil B."/>
            <person name="Wellenreuther R."/>
            <person name="Gassenhuber J."/>
            <person name="Glassl S."/>
            <person name="Ansorge W."/>
            <person name="Boecher M."/>
            <person name="Bloecker H."/>
            <person name="Bauersachs S."/>
            <person name="Blum H."/>
            <person name="Lauber J."/>
            <person name="Duesterhoeft A."/>
            <person name="Beyer A."/>
            <person name="Koehrer K."/>
            <person name="Strack N."/>
            <person name="Mewes H.-W."/>
            <person name="Ottenwaelder B."/>
            <person name="Obermaier B."/>
            <person name="Tampe J."/>
            <person name="Heubner D."/>
            <person name="Wambutt R."/>
            <person name="Korn B."/>
            <person name="Klein M."/>
            <person name="Poustka A."/>
        </authorList>
    </citation>
    <scope>NUCLEOTIDE SEQUENCE [LARGE SCALE MRNA] (ISOFORM 1)</scope>
    <source>
        <tissue>Testis</tissue>
    </source>
</reference>
<reference key="2">
    <citation type="journal article" date="2004" name="Nat. Genet.">
        <title>Complete sequencing and characterization of 21,243 full-length human cDNAs.</title>
        <authorList>
            <person name="Ota T."/>
            <person name="Suzuki Y."/>
            <person name="Nishikawa T."/>
            <person name="Otsuki T."/>
            <person name="Sugiyama T."/>
            <person name="Irie R."/>
            <person name="Wakamatsu A."/>
            <person name="Hayashi K."/>
            <person name="Sato H."/>
            <person name="Nagai K."/>
            <person name="Kimura K."/>
            <person name="Makita H."/>
            <person name="Sekine M."/>
            <person name="Obayashi M."/>
            <person name="Nishi T."/>
            <person name="Shibahara T."/>
            <person name="Tanaka T."/>
            <person name="Ishii S."/>
            <person name="Yamamoto J."/>
            <person name="Saito K."/>
            <person name="Kawai Y."/>
            <person name="Isono Y."/>
            <person name="Nakamura Y."/>
            <person name="Nagahari K."/>
            <person name="Murakami K."/>
            <person name="Yasuda T."/>
            <person name="Iwayanagi T."/>
            <person name="Wagatsuma M."/>
            <person name="Shiratori A."/>
            <person name="Sudo H."/>
            <person name="Hosoiri T."/>
            <person name="Kaku Y."/>
            <person name="Kodaira H."/>
            <person name="Kondo H."/>
            <person name="Sugawara M."/>
            <person name="Takahashi M."/>
            <person name="Kanda K."/>
            <person name="Yokoi T."/>
            <person name="Furuya T."/>
            <person name="Kikkawa E."/>
            <person name="Omura Y."/>
            <person name="Abe K."/>
            <person name="Kamihara K."/>
            <person name="Katsuta N."/>
            <person name="Sato K."/>
            <person name="Tanikawa M."/>
            <person name="Yamazaki M."/>
            <person name="Ninomiya K."/>
            <person name="Ishibashi T."/>
            <person name="Yamashita H."/>
            <person name="Murakawa K."/>
            <person name="Fujimori K."/>
            <person name="Tanai H."/>
            <person name="Kimata M."/>
            <person name="Watanabe M."/>
            <person name="Hiraoka S."/>
            <person name="Chiba Y."/>
            <person name="Ishida S."/>
            <person name="Ono Y."/>
            <person name="Takiguchi S."/>
            <person name="Watanabe S."/>
            <person name="Yosida M."/>
            <person name="Hotuta T."/>
            <person name="Kusano J."/>
            <person name="Kanehori K."/>
            <person name="Takahashi-Fujii A."/>
            <person name="Hara H."/>
            <person name="Tanase T.-O."/>
            <person name="Nomura Y."/>
            <person name="Togiya S."/>
            <person name="Komai F."/>
            <person name="Hara R."/>
            <person name="Takeuchi K."/>
            <person name="Arita M."/>
            <person name="Imose N."/>
            <person name="Musashino K."/>
            <person name="Yuuki H."/>
            <person name="Oshima A."/>
            <person name="Sasaki N."/>
            <person name="Aotsuka S."/>
            <person name="Yoshikawa Y."/>
            <person name="Matsunawa H."/>
            <person name="Ichihara T."/>
            <person name="Shiohata N."/>
            <person name="Sano S."/>
            <person name="Moriya S."/>
            <person name="Momiyama H."/>
            <person name="Satoh N."/>
            <person name="Takami S."/>
            <person name="Terashima Y."/>
            <person name="Suzuki O."/>
            <person name="Nakagawa S."/>
            <person name="Senoh A."/>
            <person name="Mizoguchi H."/>
            <person name="Goto Y."/>
            <person name="Shimizu F."/>
            <person name="Wakebe H."/>
            <person name="Hishigaki H."/>
            <person name="Watanabe T."/>
            <person name="Sugiyama A."/>
            <person name="Takemoto M."/>
            <person name="Kawakami B."/>
            <person name="Yamazaki M."/>
            <person name="Watanabe K."/>
            <person name="Kumagai A."/>
            <person name="Itakura S."/>
            <person name="Fukuzumi Y."/>
            <person name="Fujimori Y."/>
            <person name="Komiyama M."/>
            <person name="Tashiro H."/>
            <person name="Tanigami A."/>
            <person name="Fujiwara T."/>
            <person name="Ono T."/>
            <person name="Yamada K."/>
            <person name="Fujii Y."/>
            <person name="Ozaki K."/>
            <person name="Hirao M."/>
            <person name="Ohmori Y."/>
            <person name="Kawabata A."/>
            <person name="Hikiji T."/>
            <person name="Kobatake N."/>
            <person name="Inagaki H."/>
            <person name="Ikema Y."/>
            <person name="Okamoto S."/>
            <person name="Okitani R."/>
            <person name="Kawakami T."/>
            <person name="Noguchi S."/>
            <person name="Itoh T."/>
            <person name="Shigeta K."/>
            <person name="Senba T."/>
            <person name="Matsumura K."/>
            <person name="Nakajima Y."/>
            <person name="Mizuno T."/>
            <person name="Morinaga M."/>
            <person name="Sasaki M."/>
            <person name="Togashi T."/>
            <person name="Oyama M."/>
            <person name="Hata H."/>
            <person name="Watanabe M."/>
            <person name="Komatsu T."/>
            <person name="Mizushima-Sugano J."/>
            <person name="Satoh T."/>
            <person name="Shirai Y."/>
            <person name="Takahashi Y."/>
            <person name="Nakagawa K."/>
            <person name="Okumura K."/>
            <person name="Nagase T."/>
            <person name="Nomura N."/>
            <person name="Kikuchi H."/>
            <person name="Masuho Y."/>
            <person name="Yamashita R."/>
            <person name="Nakai K."/>
            <person name="Yada T."/>
            <person name="Nakamura Y."/>
            <person name="Ohara O."/>
            <person name="Isogai T."/>
            <person name="Sugano S."/>
        </authorList>
    </citation>
    <scope>NUCLEOTIDE SEQUENCE [LARGE SCALE MRNA] (ISOFORM 1)</scope>
    <source>
        <tissue>Brain</tissue>
    </source>
</reference>
<reference key="3">
    <citation type="journal article" date="2004" name="Genome Res.">
        <title>The status, quality, and expansion of the NIH full-length cDNA project: the Mammalian Gene Collection (MGC).</title>
        <authorList>
            <consortium name="The MGC Project Team"/>
        </authorList>
    </citation>
    <scope>NUCLEOTIDE SEQUENCE [LARGE SCALE MRNA] (ISOFORMS 1 AND 2)</scope>
    <source>
        <tissue>Testis</tissue>
    </source>
</reference>
<reference key="4">
    <citation type="journal article" date="2015" name="PLoS ONE">
        <title>Characterization of tetratricopeptide repeat-containing proteins critical for cilia formation and function.</title>
        <authorList>
            <person name="Xu Y."/>
            <person name="Cao J."/>
            <person name="Huang S."/>
            <person name="Feng D."/>
            <person name="Zhang W."/>
            <person name="Zhu X."/>
            <person name="Yan X."/>
        </authorList>
    </citation>
    <scope>INTERACTION WITH COMPONENTS OF THE IFT A AND B COMPLEXES</scope>
</reference>
<reference key="5">
    <citation type="journal article" date="2016" name="Am. J. Hum. Genet.">
        <title>TTC25 deficiency results in defects of the outer dynein arm docking machinery and primary ciliary dyskinesia with left-right body asymmetry randomization.</title>
        <authorList>
            <person name="Wallmeier J."/>
            <person name="Shiratori H."/>
            <person name="Dougherty G.W."/>
            <person name="Edelbusch C."/>
            <person name="Hjeij R."/>
            <person name="Loges N.T."/>
            <person name="Menchen T."/>
            <person name="Olbrich H."/>
            <person name="Pennekamp P."/>
            <person name="Raidt J."/>
            <person name="Werner C."/>
            <person name="Minegishi K."/>
            <person name="Shinohara K."/>
            <person name="Asai Y."/>
            <person name="Takaoka K."/>
            <person name="Lee C."/>
            <person name="Griese M."/>
            <person name="Memari Y."/>
            <person name="Durbin R."/>
            <person name="Kolb-Kokocinski A."/>
            <person name="Sauer S."/>
            <person name="Wallingford J.B."/>
            <person name="Hamada H."/>
            <person name="Omran H."/>
        </authorList>
    </citation>
    <scope>INVOLVEMENT IN CILD35</scope>
    <scope>FUNCTION</scope>
    <scope>INTERACTION WITH ODAD1</scope>
    <scope>SUBCELLULAR LOCATION</scope>
    <scope>TISSUE SPECIFICITY</scope>
    <scope>SUBUNIT</scope>
</reference>
<proteinExistence type="evidence at protein level"/>
<protein>
    <recommendedName>
        <fullName>Outer dynein arm-docking complex subunit 4</fullName>
    </recommendedName>
    <alternativeName>
        <fullName>Tetratricopeptide repeat protein 25</fullName>
        <shortName>TPR repeat protein 25</shortName>
    </alternativeName>
</protein>
<sequence length="672" mass="76655">MSDPEGETLRSTFPSYMAEGERLYLCGEFSKAAQSFSNALYLQDGDKNCLVARSKCFLKMGDLERSLKDAEASLQSDPAFCKGILQKAETLYTMGDFEFALVFYHRGYKLRPDREFRVGIQKAQEAINNSVGSPSSIKLENKGDLSFLSKQAENIKAQQKPQPMKHLLHPTKGEPKWKASLKSEKTVRQLLGELYVDKEYLEKLLLDEDLIKGTMKGGLTVEDLIMTGINYLDTHSNFWRQQKPIYARERDRKLMQEKWLRDHKRRPSQTAHYILKSLEDIDMLLTSGSAEGSLQKAEKVLKKVLEWNKEEVPNKDELVGNLYSCIGNAQIELGQMEAALQSHRKDLEIAKEYDLPDAKSRALDNIGRVFARVGKFQQAIDTWEEKIPLAKTTLEKTWLFHEIGRCYLELDQAWQAQNYGEKSQQCAEEEGDIEWQLNASVLVAQAQVKLRDFESAVNNFEKALERAKLVHNNEAQQAIISALDDANKGIIRELRKTNYVENLKEKSEGEASLYEDRIITREKDMRRVRDEPEKVVKQWDHSEDEKETDEDDEAFGEALQSPASGKQSVEAGKARSDLGAVAKGLSGELGTRSGETGRKLLEAGRRESREIYRRPSGELEQRLSGEFSRQEPEELKKLSEVGRREPEELGKTQFGEIGETKKTGNEMEKEYE</sequence>
<evidence type="ECO:0000250" key="1">
    <source>
        <dbReference type="UniProtKB" id="Q9D4B2"/>
    </source>
</evidence>
<evidence type="ECO:0000255" key="2"/>
<evidence type="ECO:0000256" key="3">
    <source>
        <dbReference type="SAM" id="MobiDB-lite"/>
    </source>
</evidence>
<evidence type="ECO:0000269" key="4">
    <source>
    </source>
</evidence>
<evidence type="ECO:0000269" key="5">
    <source>
    </source>
</evidence>
<evidence type="ECO:0000303" key="6">
    <source>
    </source>
</evidence>
<evidence type="ECO:0000305" key="7"/>
<evidence type="ECO:0000312" key="8">
    <source>
        <dbReference type="HGNC" id="HGNC:25280"/>
    </source>
</evidence>
<feature type="chain" id="PRO_0000284507" description="Outer dynein arm-docking complex subunit 4">
    <location>
        <begin position="1"/>
        <end position="672"/>
    </location>
</feature>
<feature type="repeat" description="TPR 1" evidence="2">
    <location>
        <begin position="13"/>
        <end position="46"/>
    </location>
</feature>
<feature type="repeat" description="TPR 2" evidence="2">
    <location>
        <begin position="48"/>
        <end position="80"/>
    </location>
</feature>
<feature type="repeat" description="TPR 3" evidence="2">
    <location>
        <begin position="81"/>
        <end position="114"/>
    </location>
</feature>
<feature type="repeat" description="TPR 4" evidence="2">
    <location>
        <begin position="275"/>
        <end position="311"/>
    </location>
</feature>
<feature type="repeat" description="TPR 5" evidence="2">
    <location>
        <begin position="320"/>
        <end position="353"/>
    </location>
</feature>
<feature type="repeat" description="TPR 6" evidence="2">
    <location>
        <begin position="360"/>
        <end position="393"/>
    </location>
</feature>
<feature type="repeat" description="TPR 7" evidence="2">
    <location>
        <begin position="397"/>
        <end position="430"/>
    </location>
</feature>
<feature type="repeat" description="TPR 8" evidence="2">
    <location>
        <begin position="437"/>
        <end position="470"/>
    </location>
</feature>
<feature type="region of interest" description="Disordered" evidence="3">
    <location>
        <begin position="527"/>
        <end position="672"/>
    </location>
</feature>
<feature type="compositionally biased region" description="Basic and acidic residues" evidence="3">
    <location>
        <begin position="527"/>
        <end position="544"/>
    </location>
</feature>
<feature type="compositionally biased region" description="Acidic residues" evidence="3">
    <location>
        <begin position="545"/>
        <end position="555"/>
    </location>
</feature>
<feature type="compositionally biased region" description="Basic and acidic residues" evidence="3">
    <location>
        <begin position="595"/>
        <end position="650"/>
    </location>
</feature>
<feature type="compositionally biased region" description="Basic and acidic residues" evidence="3">
    <location>
        <begin position="658"/>
        <end position="672"/>
    </location>
</feature>
<feature type="splice variant" id="VSP_024548" description="In isoform 2." evidence="6">
    <original>DLIKGTMKGGLTVEDLIMTGINYLDTHSNFWRQQKPIYARERDRKLMQEKWLRDHKRRPSQTAHYILKSLEDIDMLLTSGSAEG</original>
    <variation>VTFLMQNREPLTTLAEFLPELGNSSKPLTRGKKRSLWQKPPWRRPGCSTRSAAATWSWTRPGRPRIMARSPSSVPRRKGTLSGN</variation>
    <location>
        <begin position="209"/>
        <end position="292"/>
    </location>
</feature>
<feature type="splice variant" id="VSP_024549" description="In isoform 2." evidence="6">
    <location>
        <begin position="293"/>
        <end position="672"/>
    </location>
</feature>
<feature type="sequence variant" id="VAR_031758" description="In dbSNP:rs34516580.">
    <original>P</original>
    <variation>S</variation>
    <location>
        <position position="4"/>
    </location>
</feature>
<feature type="sequence variant" id="VAR_031759" description="In dbSNP:rs35516909.">
    <original>A</original>
    <variation>G</variation>
    <location>
        <position position="18"/>
    </location>
</feature>
<feature type="sequence conflict" description="In Ref. 3; AAH25390." evidence="7" ref="3">
    <original>Q</original>
    <variation>K</variation>
    <location>
        <position position="43"/>
    </location>
</feature>
<feature type="sequence conflict" description="In Ref. 2; BAB70936." evidence="7" ref="2">
    <original>P</original>
    <variation>L</variation>
    <location>
        <position position="244"/>
    </location>
</feature>
<comment type="function">
    <text evidence="5">Component of the outer dynein arm-docking complex (ODA-DC) that mediates outer dynein arms (ODA) binding onto the doublet microtubule. Plays an essential role for the assembly of ODA-DC and for the docking of ODA in ciliary axoneme.</text>
</comment>
<comment type="subunit">
    <text evidence="1 4 5">Component of the outer dynein arm-docking complex along with ODAD1, ODAD2 and ODAD3. Interacts with ODAD1; this interaction may facilitate the recruitment and/or attachment of outer dynein arm docking complex proteins, including ODAD1, ODAD3 and ODAD2, to ciliary axonemes (PubMed:27486780). Interacts with components of the IFT complex A, including IFT140, TTC21B/IFT139 and WDR19/IFT144, and the IFT complex B, including IFT46, IFT52 and IFT57 (PubMed:25860617). Interacts with CFAP53 (By similarity).</text>
</comment>
<comment type="interaction">
    <interactant intactId="EBI-1046387">
        <id>Q96NG3</id>
    </interactant>
    <interactant intactId="EBI-739674">
        <id>Q15834</id>
        <label>CCDC85B</label>
    </interactant>
    <organismsDiffer>false</organismsDiffer>
    <experiments>3</experiments>
</comment>
<comment type="interaction">
    <interactant intactId="EBI-1046387">
        <id>Q96NG3</id>
    </interactant>
    <interactant intactId="EBI-739624">
        <id>Q8NHQ1</id>
        <label>CEP70</label>
    </interactant>
    <organismsDiffer>false</organismsDiffer>
    <experiments>3</experiments>
</comment>
<comment type="interaction">
    <interactant intactId="EBI-1046387">
        <id>Q96NG3</id>
    </interactant>
    <interactant intactId="EBI-618309">
        <id>Q08379</id>
        <label>GOLGA2</label>
    </interactant>
    <organismsDiffer>false</organismsDiffer>
    <experiments>3</experiments>
</comment>
<comment type="interaction">
    <interactant intactId="EBI-1046387">
        <id>Q96NG3</id>
    </interactant>
    <interactant intactId="EBI-10171697">
        <id>Q6A162</id>
        <label>KRT40</label>
    </interactant>
    <organismsDiffer>false</organismsDiffer>
    <experiments>3</experiments>
</comment>
<comment type="interaction">
    <interactant intactId="EBI-1046387">
        <id>Q96NG3</id>
    </interactant>
    <interactant intactId="EBI-748397">
        <id>P50222</id>
        <label>MEOX2</label>
    </interactant>
    <organismsDiffer>false</organismsDiffer>
    <experiments>3</experiments>
</comment>
<comment type="interaction">
    <interactant intactId="EBI-1046387">
        <id>Q96NG3</id>
    </interactant>
    <interactant intactId="EBI-2340269">
        <id>Q13064</id>
        <label>MKRN3</label>
    </interactant>
    <organismsDiffer>false</organismsDiffer>
    <experiments>3</experiments>
</comment>
<comment type="interaction">
    <interactant intactId="EBI-1046387">
        <id>Q96NG3</id>
    </interactant>
    <interactant intactId="EBI-3906629">
        <id>P15173</id>
        <label>MYOG</label>
    </interactant>
    <organismsDiffer>false</organismsDiffer>
    <experiments>3</experiments>
</comment>
<comment type="interaction">
    <interactant intactId="EBI-1046387">
        <id>Q96NG3</id>
    </interactant>
    <interactant intactId="EBI-10172876">
        <id>Q7Z6G3-2</id>
        <label>NECAB2</label>
    </interactant>
    <organismsDiffer>false</organismsDiffer>
    <experiments>3</experiments>
</comment>
<comment type="subcellular location">
    <subcellularLocation>
        <location evidence="5">Cytoplasm</location>
        <location evidence="5">Cytoskeleton</location>
        <location evidence="5">Cilium axoneme</location>
    </subcellularLocation>
</comment>
<comment type="alternative products">
    <event type="alternative splicing"/>
    <isoform>
        <id>Q96NG3-1</id>
        <name>1</name>
        <sequence type="displayed"/>
    </isoform>
    <isoform>
        <id>Q96NG3-2</id>
        <name>2</name>
        <sequence type="described" ref="VSP_024548 VSP_024549"/>
    </isoform>
</comment>
<comment type="tissue specificity">
    <text evidence="5">Expressed in the nasal mucosa (at protein level).</text>
</comment>
<comment type="disease" evidence="5">
    <disease id="DI-04827">
        <name>Ciliary dyskinesia, primary, 35</name>
        <acronym>CILD35</acronym>
        <description>A form of primary ciliary dyskinesia, a disorder characterized by abnormalities of motile cilia. Respiratory infections leading to chronic inflammation and bronchiectasis are recurrent, due to defects in the respiratory cilia. Some patients exhibit randomization of left-right body asymmetry and situs inversus. Primary ciliary dyskinesia associated with situs inversus is referred to as Kartagener syndrome. CILD35 inheritance is autosomal recessive.</description>
        <dbReference type="MIM" id="617092"/>
    </disease>
    <text>The disease is caused by variants affecting the gene represented in this entry.</text>
</comment>
<comment type="sequence caution" evidence="7">
    <conflict type="frameshift">
        <sequence resource="EMBL-CDS" id="AAH67297"/>
    </conflict>
</comment>
<organism>
    <name type="scientific">Homo sapiens</name>
    <name type="common">Human</name>
    <dbReference type="NCBI Taxonomy" id="9606"/>
    <lineage>
        <taxon>Eukaryota</taxon>
        <taxon>Metazoa</taxon>
        <taxon>Chordata</taxon>
        <taxon>Craniata</taxon>
        <taxon>Vertebrata</taxon>
        <taxon>Euteleostomi</taxon>
        <taxon>Mammalia</taxon>
        <taxon>Eutheria</taxon>
        <taxon>Euarchontoglires</taxon>
        <taxon>Primates</taxon>
        <taxon>Haplorrhini</taxon>
        <taxon>Catarrhini</taxon>
        <taxon>Hominidae</taxon>
        <taxon>Homo</taxon>
    </lineage>
</organism>
<gene>
    <name evidence="8" type="primary">ODAD4</name>
    <name type="synonym">TTC25</name>
</gene>
<dbReference type="EMBL" id="AL136760">
    <property type="protein sequence ID" value="CAB66694.1"/>
    <property type="molecule type" value="mRNA"/>
</dbReference>
<dbReference type="EMBL" id="AK055498">
    <property type="protein sequence ID" value="BAB70936.1"/>
    <property type="molecule type" value="mRNA"/>
</dbReference>
<dbReference type="EMBL" id="BC025390">
    <property type="protein sequence ID" value="AAH25390.1"/>
    <property type="molecule type" value="mRNA"/>
</dbReference>
<dbReference type="EMBL" id="BC067297">
    <property type="protein sequence ID" value="AAH67297.1"/>
    <property type="status" value="ALT_FRAME"/>
    <property type="molecule type" value="mRNA"/>
</dbReference>
<dbReference type="CCDS" id="CCDS74063.1">
    <molecule id="Q96NG3-1"/>
</dbReference>
<dbReference type="RefSeq" id="NP_113609.1">
    <molecule id="Q96NG3-1"/>
    <property type="nucleotide sequence ID" value="NM_031421.5"/>
</dbReference>
<dbReference type="PDB" id="8J07">
    <property type="method" value="EM"/>
    <property type="resolution" value="4.10 A"/>
    <property type="chains" value="m9/q9/s9/u9=1-672"/>
</dbReference>
<dbReference type="PDBsum" id="8J07"/>
<dbReference type="EMDB" id="EMD-35888"/>
<dbReference type="SMR" id="Q96NG3"/>
<dbReference type="BioGRID" id="123671">
    <property type="interactions" value="26"/>
</dbReference>
<dbReference type="ComplexPortal" id="CPX-2626">
    <property type="entry name" value="Outer dynein arm-docking complex"/>
</dbReference>
<dbReference type="CORUM" id="Q96NG3"/>
<dbReference type="FunCoup" id="Q96NG3">
    <property type="interactions" value="143"/>
</dbReference>
<dbReference type="IntAct" id="Q96NG3">
    <property type="interactions" value="21"/>
</dbReference>
<dbReference type="MINT" id="Q96NG3"/>
<dbReference type="STRING" id="9606.ENSP00000478589"/>
<dbReference type="GlyGen" id="Q96NG3">
    <property type="glycosylation" value="1 site, 1 O-linked glycan (1 site)"/>
</dbReference>
<dbReference type="iPTMnet" id="Q96NG3"/>
<dbReference type="PhosphoSitePlus" id="Q96NG3"/>
<dbReference type="BioMuta" id="TTC25"/>
<dbReference type="DMDM" id="145572736"/>
<dbReference type="jPOST" id="Q96NG3"/>
<dbReference type="MassIVE" id="Q96NG3"/>
<dbReference type="PaxDb" id="9606-ENSP00000478589"/>
<dbReference type="PeptideAtlas" id="Q96NG3"/>
<dbReference type="ProteomicsDB" id="77508">
    <molecule id="Q96NG3-1"/>
</dbReference>
<dbReference type="ProteomicsDB" id="77509">
    <molecule id="Q96NG3-2"/>
</dbReference>
<dbReference type="Antibodypedia" id="8054">
    <property type="antibodies" value="17 antibodies from 10 providers"/>
</dbReference>
<dbReference type="DNASU" id="83538"/>
<dbReference type="Ensembl" id="ENST00000377540.6">
    <molecule id="Q96NG3-1"/>
    <property type="protein sequence ID" value="ENSP00000478589.1"/>
    <property type="gene ID" value="ENSG00000204815.10"/>
</dbReference>
<dbReference type="GeneID" id="83538"/>
<dbReference type="KEGG" id="hsa:83538"/>
<dbReference type="MANE-Select" id="ENST00000377540.6">
    <property type="protein sequence ID" value="ENSP00000478589.1"/>
    <property type="RefSeq nucleotide sequence ID" value="NM_031421.5"/>
    <property type="RefSeq protein sequence ID" value="NP_113609.1"/>
</dbReference>
<dbReference type="UCSC" id="uc032fin.2">
    <molecule id="Q96NG3-1"/>
    <property type="organism name" value="human"/>
</dbReference>
<dbReference type="AGR" id="HGNC:25280"/>
<dbReference type="CTD" id="83538"/>
<dbReference type="DisGeNET" id="83538"/>
<dbReference type="GeneCards" id="ODAD4"/>
<dbReference type="HGNC" id="HGNC:25280">
    <property type="gene designation" value="ODAD4"/>
</dbReference>
<dbReference type="HPA" id="ENSG00000204815">
    <property type="expression patterns" value="Group enriched (choroid plexus, fallopian tube, testis)"/>
</dbReference>
<dbReference type="MalaCards" id="ODAD4"/>
<dbReference type="MIM" id="617092">
    <property type="type" value="phenotype"/>
</dbReference>
<dbReference type="MIM" id="617095">
    <property type="type" value="gene"/>
</dbReference>
<dbReference type="neXtProt" id="NX_Q96NG3"/>
<dbReference type="OpenTargets" id="ENSG00000204815"/>
<dbReference type="Orphanet" id="244">
    <property type="disease" value="Primary ciliary dyskinesia"/>
</dbReference>
<dbReference type="VEuPathDB" id="HostDB:ENSG00000204815"/>
<dbReference type="eggNOG" id="KOG1124">
    <property type="taxonomic scope" value="Eukaryota"/>
</dbReference>
<dbReference type="GeneTree" id="ENSGT00390000007911"/>
<dbReference type="HOGENOM" id="CLU_023648_2_1_1"/>
<dbReference type="InParanoid" id="Q96NG3"/>
<dbReference type="OMA" id="VMPGCKP"/>
<dbReference type="OrthoDB" id="10268002at2759"/>
<dbReference type="PAN-GO" id="Q96NG3">
    <property type="GO annotations" value="1 GO annotation based on evolutionary models"/>
</dbReference>
<dbReference type="PhylomeDB" id="Q96NG3"/>
<dbReference type="PathwayCommons" id="Q96NG3"/>
<dbReference type="SignaLink" id="Q96NG3"/>
<dbReference type="SIGNOR" id="Q96NG3"/>
<dbReference type="BioGRID-ORCS" id="83538">
    <property type="hits" value="10 hits in 262 CRISPR screens"/>
</dbReference>
<dbReference type="ChiTaRS" id="TTC25">
    <property type="organism name" value="human"/>
</dbReference>
<dbReference type="GeneWiki" id="TTC25"/>
<dbReference type="GenomeRNAi" id="83538"/>
<dbReference type="Pharos" id="Q96NG3">
    <property type="development level" value="Tdark"/>
</dbReference>
<dbReference type="PRO" id="PR:Q96NG3"/>
<dbReference type="Proteomes" id="UP000005640">
    <property type="component" value="Chromosome 17"/>
</dbReference>
<dbReference type="RNAct" id="Q96NG3">
    <property type="molecule type" value="protein"/>
</dbReference>
<dbReference type="Bgee" id="ENSG00000204815">
    <property type="expression patterns" value="Expressed in right uterine tube and 147 other cell types or tissues"/>
</dbReference>
<dbReference type="ExpressionAtlas" id="Q96NG3">
    <property type="expression patterns" value="baseline and differential"/>
</dbReference>
<dbReference type="GO" id="GO:0097728">
    <property type="term" value="C:9+0 motile cilium"/>
    <property type="evidence" value="ECO:0007669"/>
    <property type="project" value="Ensembl"/>
</dbReference>
<dbReference type="GO" id="GO:0097729">
    <property type="term" value="C:9+2 motile cilium"/>
    <property type="evidence" value="ECO:0000314"/>
    <property type="project" value="GO_Central"/>
</dbReference>
<dbReference type="GO" id="GO:0005930">
    <property type="term" value="C:axoneme"/>
    <property type="evidence" value="ECO:0000314"/>
    <property type="project" value="GO_Central"/>
</dbReference>
<dbReference type="GO" id="GO:0005737">
    <property type="term" value="C:cytoplasm"/>
    <property type="evidence" value="ECO:0000314"/>
    <property type="project" value="LIFEdb"/>
</dbReference>
<dbReference type="GO" id="GO:0005576">
    <property type="term" value="C:extracellular region"/>
    <property type="evidence" value="ECO:0007669"/>
    <property type="project" value="GOC"/>
</dbReference>
<dbReference type="GO" id="GO:0120228">
    <property type="term" value="C:outer dynein arm docking complex"/>
    <property type="evidence" value="ECO:0000314"/>
    <property type="project" value="GO_Central"/>
</dbReference>
<dbReference type="GO" id="GO:0007420">
    <property type="term" value="P:brain development"/>
    <property type="evidence" value="ECO:0007669"/>
    <property type="project" value="Ensembl"/>
</dbReference>
<dbReference type="GO" id="GO:0090660">
    <property type="term" value="P:cerebrospinal fluid circulation"/>
    <property type="evidence" value="ECO:0007669"/>
    <property type="project" value="Ensembl"/>
</dbReference>
<dbReference type="GO" id="GO:0003341">
    <property type="term" value="P:cilium movement"/>
    <property type="evidence" value="ECO:0000314"/>
    <property type="project" value="GO_Central"/>
</dbReference>
<dbReference type="GO" id="GO:0060287">
    <property type="term" value="P:epithelial cilium movement involved in determination of left/right asymmetry"/>
    <property type="evidence" value="ECO:0000315"/>
    <property type="project" value="GO_Central"/>
</dbReference>
<dbReference type="GO" id="GO:0007507">
    <property type="term" value="P:heart development"/>
    <property type="evidence" value="ECO:0007669"/>
    <property type="project" value="Ensembl"/>
</dbReference>
<dbReference type="GO" id="GO:0030324">
    <property type="term" value="P:lung development"/>
    <property type="evidence" value="ECO:0007669"/>
    <property type="project" value="Ensembl"/>
</dbReference>
<dbReference type="GO" id="GO:0120197">
    <property type="term" value="P:mucociliary clearance"/>
    <property type="evidence" value="ECO:0000315"/>
    <property type="project" value="GO_Central"/>
</dbReference>
<dbReference type="GO" id="GO:0036158">
    <property type="term" value="P:outer dynein arm assembly"/>
    <property type="evidence" value="ECO:0000314"/>
    <property type="project" value="GO_Central"/>
</dbReference>
<dbReference type="GO" id="GO:0120229">
    <property type="term" value="P:protein localization to motile cilium"/>
    <property type="evidence" value="ECO:0000315"/>
    <property type="project" value="GO_Central"/>
</dbReference>
<dbReference type="FunFam" id="1.25.40.10:FF:000189">
    <property type="entry name" value="Tetratricopeptide repeat domain 25"/>
    <property type="match status" value="1"/>
</dbReference>
<dbReference type="FunFam" id="1.25.40.10:FF:000274">
    <property type="entry name" value="Tetratricopeptide repeat domain 25"/>
    <property type="match status" value="1"/>
</dbReference>
<dbReference type="Gene3D" id="1.25.40.10">
    <property type="entry name" value="Tetratricopeptide repeat domain"/>
    <property type="match status" value="2"/>
</dbReference>
<dbReference type="InterPro" id="IPR040111">
    <property type="entry name" value="ODAD4"/>
</dbReference>
<dbReference type="InterPro" id="IPR011990">
    <property type="entry name" value="TPR-like_helical_dom_sf"/>
</dbReference>
<dbReference type="InterPro" id="IPR019734">
    <property type="entry name" value="TPR_rpt"/>
</dbReference>
<dbReference type="PANTHER" id="PTHR23040">
    <property type="match status" value="1"/>
</dbReference>
<dbReference type="PANTHER" id="PTHR23040:SF1">
    <property type="entry name" value="OUTER DYNEIN ARM-DOCKING COMPLEX SUBUNIT 4"/>
    <property type="match status" value="1"/>
</dbReference>
<dbReference type="Pfam" id="PF13181">
    <property type="entry name" value="TPR_8"/>
    <property type="match status" value="1"/>
</dbReference>
<dbReference type="SMART" id="SM00028">
    <property type="entry name" value="TPR"/>
    <property type="match status" value="7"/>
</dbReference>
<dbReference type="SUPFAM" id="SSF48452">
    <property type="entry name" value="TPR-like"/>
    <property type="match status" value="1"/>
</dbReference>
<dbReference type="PROSITE" id="PS50005">
    <property type="entry name" value="TPR"/>
    <property type="match status" value="6"/>
</dbReference>
<dbReference type="PROSITE" id="PS50293">
    <property type="entry name" value="TPR_REGION"/>
    <property type="match status" value="2"/>
</dbReference>
<name>ODAD4_HUMAN</name>